<proteinExistence type="evidence at protein level"/>
<gene>
    <name type="primary">PDLIM4</name>
    <name type="synonym">RIL</name>
</gene>
<keyword id="KW-0002">3D-structure</keyword>
<keyword id="KW-0025">Alternative splicing</keyword>
<keyword id="KW-0966">Cell projection</keyword>
<keyword id="KW-0963">Cytoplasm</keyword>
<keyword id="KW-0206">Cytoskeleton</keyword>
<keyword id="KW-0967">Endosome</keyword>
<keyword id="KW-0440">LIM domain</keyword>
<keyword id="KW-0472">Membrane</keyword>
<keyword id="KW-0479">Metal-binding</keyword>
<keyword id="KW-0539">Nucleus</keyword>
<keyword id="KW-0597">Phosphoprotein</keyword>
<keyword id="KW-1267">Proteomics identification</keyword>
<keyword id="KW-1185">Reference proteome</keyword>
<keyword id="KW-0770">Synapse</keyword>
<keyword id="KW-0771">Synaptosome</keyword>
<keyword id="KW-0862">Zinc</keyword>
<organism>
    <name type="scientific">Homo sapiens</name>
    <name type="common">Human</name>
    <dbReference type="NCBI Taxonomy" id="9606"/>
    <lineage>
        <taxon>Eukaryota</taxon>
        <taxon>Metazoa</taxon>
        <taxon>Chordata</taxon>
        <taxon>Craniata</taxon>
        <taxon>Vertebrata</taxon>
        <taxon>Euteleostomi</taxon>
        <taxon>Mammalia</taxon>
        <taxon>Eutheria</taxon>
        <taxon>Euarchontoglires</taxon>
        <taxon>Primates</taxon>
        <taxon>Haplorrhini</taxon>
        <taxon>Catarrhini</taxon>
        <taxon>Hominidae</taxon>
        <taxon>Homo</taxon>
    </lineage>
</organism>
<comment type="function">
    <molecule>Isoform 1</molecule>
    <text evidence="1 8 9">Suppresses SRC activation by recognizing and binding to active SRC and facilitating PTPN13-mediated dephosphorylation of SRC 'Tyr-419' leading to its inactivation. Inactivated SRC dissociates from this protein allowing the initiation of a new SRC inactivation cycle (PubMed:19307596). Involved in reorganization of the actin cytoskeleton (PubMed:21636573). In nonmuscle cells, binds to ACTN1 (alpha-actinin-1), increases the affinity of ACTN1 to F-actin (filamentous actin), and promotes formation of actin stress fibers. Involved in regulation of the synaptic AMPA receptor transport in dendritic spines of hippocampal pyramidal neurons directing the receptors toward an insertion at the postsynaptic membrane. Links endosomal surface-internalized GRIA1-containing AMPA receptors to the alpha-actinin/actin cytoskeleton. Increases AMPA receptor-mediated excitatory postsynaptic currents in neurons (By similarity).</text>
</comment>
<comment type="function">
    <molecule>Isoform 2</molecule>
    <text evidence="9">Involved in reorganization of the actin cytoskeleton and in regulation of cell migration. In response to oxidative stress, binds to NQO1, which stabilizes it and protects it from ubiquitin-independent degradation by the core 20S proteasome. Stabilized protein is able to heterodimerize with isoform 1 changing the subcellular location of it from cytoskeleton and nuclei to cytosol, leading to loss of isoforms 1 ability to induce formation of actin stress fibers. Counteracts the effects produced by isoform 1 on organization of actin cytoskeleton and cell motility to fine-tune actin cytoskeleton rearrangement and to attenuate cell migration.</text>
</comment>
<comment type="subunit">
    <text evidence="1 2 6 8 9 10">Homodimer (PubMed:25158098). Interacts with PTPN13 (PubMed:19307596). Interacts (via C-terminus only or via combined C-terminus and LIM domain, but not LIM domain only) with PTPN13 (via the second or fourth PDZ domains). Found in a complex with PTPN13 and TRIP6 (By similarity). Interacts (via PDZ domain) with ACTN1 and ACTN2 (via C-terminal SDL residues) (By similarity). Interacts (via PDZ domain) with TRIP6 (via the second LIM domain or via the third LIM domain plus C-terminus) (PubMed:10826496). Interacts (via LIM domain) with GRIA1 (via C-terminus); this interaction as well as the interaction with alpha-actinin is required for their colocalization in early endosomes. Interacts with PDLIM1 (By similarity). Forms (via LIM domain) a heterodimer with PDLIM3 (By similarity). Interacts directly with SRC (via kinase domain and to a lesser extent the SH2 domain) (PubMed:19307596). Isoform 2 interacts with NQO1. NQO1-stabilized isoform 2 heterodimerizes with isoform 1 (PubMed:21636573).</text>
</comment>
<comment type="interaction">
    <interactant intactId="EBI-372861">
        <id>P50479</id>
    </interactant>
    <interactant intactId="EBI-351710">
        <id>P12814</id>
        <label>ACTN1</label>
    </interactant>
    <organismsDiffer>false</organismsDiffer>
    <experiments>3</experiments>
</comment>
<comment type="interaction">
    <interactant intactId="EBI-372861">
        <id>P50479</id>
    </interactant>
    <interactant intactId="EBI-14394829">
        <id>P48728-4</id>
        <label>AMT</label>
    </interactant>
    <organismsDiffer>false</organismsDiffer>
    <experiments>5</experiments>
</comment>
<comment type="interaction">
    <interactant intactId="EBI-372861">
        <id>P50479</id>
    </interactant>
    <interactant intactId="EBI-2807642">
        <id>Q8WU58</id>
        <label>FAM222B</label>
    </interactant>
    <organismsDiffer>false</organismsDiffer>
    <experiments>3</experiments>
</comment>
<comment type="interaction">
    <interactant intactId="EBI-372861">
        <id>P50479</id>
    </interactant>
    <interactant intactId="EBI-727004">
        <id>O00560</id>
        <label>SDCBP</label>
    </interactant>
    <organismsDiffer>false</organismsDiffer>
    <experiments>3</experiments>
</comment>
<comment type="subcellular location">
    <molecule>Isoform 1</molecule>
    <subcellularLocation>
        <location evidence="9">Cytoplasm</location>
        <location evidence="9">Cytoskeleton</location>
    </subcellularLocation>
    <subcellularLocation>
        <location evidence="6 9">Nucleus</location>
    </subcellularLocation>
    <subcellularLocation>
        <location evidence="9">Cytoplasm</location>
    </subcellularLocation>
    <subcellularLocation>
        <location evidence="8">Cytoplasm</location>
        <location evidence="8">Perinuclear region</location>
    </subcellularLocation>
    <subcellularLocation>
        <location evidence="6">Cell projection</location>
        <location evidence="6">Lamellipodium</location>
    </subcellularLocation>
    <subcellularLocation>
        <location evidence="1">Cell projection</location>
        <location evidence="1">Dendritic spine</location>
    </subcellularLocation>
    <subcellularLocation>
        <location evidence="1">Early endosome membrane</location>
        <topology evidence="1">Peripheral membrane protein</topology>
        <orientation evidence="1">Cytoplasmic side</orientation>
    </subcellularLocation>
    <subcellularLocation>
        <location evidence="1">Recycling endosome membrane</location>
        <topology evidence="1">Peripheral membrane protein</topology>
        <orientation evidence="1">Cytoplasmic side</orientation>
    </subcellularLocation>
    <subcellularLocation>
        <location evidence="1">Synapse</location>
        <location evidence="1">Synaptosome</location>
    </subcellularLocation>
    <text evidence="1 6 8 9">Localizes to actin stress fibers in nonmuscle cells. Colocalizes with GRIA1 in early endosomes. Enriched in numerous but not all spine-like structures along dendritic branches. Colocalizes with actin and enriched at sites containing larger amounts of actin and alpha-actinin. Targeted efficiently to spines via its PDZ domain-mediated interaction with the alpha-actinin/actin cytoskeletal complex. Localizes to synaptosomes in brain (By similarity). Colocalizes with F-actin (PubMed:10826496). Colocalizes with TRIP6 at cell-cell contacts and lamellipodia (PubMed:10826496). In the cytoplasm, displays a fibrillar pattern with characteristic thick fibers and occasional clusters. Colocalizes with the actin stress fibers. Oxidative stress induces redistribution from cytoskeleton to cytosol (PubMed:21636573). Colocalizes with SRC at the perinuclear region, but not at focal adhesions (PubMed:19307596).</text>
</comment>
<comment type="subcellular location">
    <molecule>Isoform 2</molecule>
    <subcellularLocation>
        <location evidence="9">Cytoplasm</location>
    </subcellularLocation>
    <text evidence="9">Stains more diffusely in the cytoplasm with thin fibers forming a dense mesh-like pattern.</text>
</comment>
<comment type="alternative products">
    <event type="alternative splicing"/>
    <isoform>
        <id>P50479-1</id>
        <name>1</name>
        <sequence type="displayed"/>
    </isoform>
    <isoform>
        <id>P50479-2</id>
        <name>2</name>
        <sequence type="described" ref="VSP_003124"/>
    </isoform>
</comment>
<comment type="tissue specificity">
    <molecule>Isoform 2</molecule>
    <text evidence="11">Found in brain.</text>
</comment>
<comment type="induction">
    <molecule>Isoform 2</molecule>
    <text evidence="9">Expression is up-regulated by UV irradiation and to a lesser extent by oxidative stress.</text>
</comment>
<comment type="PTM">
    <text evidence="2">Phosphorylated on tyrosine residue(s). Can be dephosphorylated by PTPN13.</text>
</comment>
<comment type="polymorphism">
    <text>Genetic variations in PDLIM4 may be correlated with bone mineral density (BMD). Low BMD is a risk factor for osteoporotic fracture. Osteoporosis is characterized by reduced bone mineral density, disruption of bone microarchitecture, and the alteration of the amount and variety of non-collagenous proteins in bone. Osteoporotic bones are more at risk of fracture.</text>
</comment>
<reference key="1">
    <citation type="submission" date="1995-10" db="EMBL/GenBank/DDBJ databases">
        <authorList>
            <person name="Scharm B."/>
            <person name="Schaefer R."/>
        </authorList>
    </citation>
    <scope>NUCLEOTIDE SEQUENCE (ISOFORM 1)</scope>
    <scope>VARIANTS CYS-142 AND CYS-259</scope>
    <source>
        <tissue>Lung</tissue>
    </source>
</reference>
<reference key="2">
    <citation type="journal article" date="1998" name="Gene">
        <title>The human RIL gene: mapping to human chromosome 5q31.1, genomic organization and alternative transcripts.</title>
        <authorList>
            <person name="Bashirova A.A."/>
            <person name="Markelov M.L."/>
            <person name="Shlykova T.V."/>
            <person name="Levshenkova E.V."/>
            <person name="Alibaeva R.A."/>
            <person name="Frolova E.I."/>
        </authorList>
    </citation>
    <scope>NUCLEOTIDE SEQUENCE [GENOMIC DNA] (ISOFORMS 1 AND 2)</scope>
    <scope>TISSUE SPECIFICITY (ISOFORM 2)</scope>
</reference>
<reference key="3">
    <citation type="submission" date="1999-05" db="EMBL/GenBank/DDBJ databases">
        <authorList>
            <person name="Bashirova A.A."/>
            <person name="Markelov M.L."/>
            <person name="Levshenkova E.V."/>
            <person name="Shelkunova M.A."/>
            <person name="Frolova E.I."/>
        </authorList>
    </citation>
    <scope>NUCLEOTIDE SEQUENCE (ISOFORM 1)</scope>
</reference>
<reference key="4">
    <citation type="journal article" date="2004" name="Nat. Genet.">
        <title>Complete sequencing and characterization of 21,243 full-length human cDNAs.</title>
        <authorList>
            <person name="Ota T."/>
            <person name="Suzuki Y."/>
            <person name="Nishikawa T."/>
            <person name="Otsuki T."/>
            <person name="Sugiyama T."/>
            <person name="Irie R."/>
            <person name="Wakamatsu A."/>
            <person name="Hayashi K."/>
            <person name="Sato H."/>
            <person name="Nagai K."/>
            <person name="Kimura K."/>
            <person name="Makita H."/>
            <person name="Sekine M."/>
            <person name="Obayashi M."/>
            <person name="Nishi T."/>
            <person name="Shibahara T."/>
            <person name="Tanaka T."/>
            <person name="Ishii S."/>
            <person name="Yamamoto J."/>
            <person name="Saito K."/>
            <person name="Kawai Y."/>
            <person name="Isono Y."/>
            <person name="Nakamura Y."/>
            <person name="Nagahari K."/>
            <person name="Murakami K."/>
            <person name="Yasuda T."/>
            <person name="Iwayanagi T."/>
            <person name="Wagatsuma M."/>
            <person name="Shiratori A."/>
            <person name="Sudo H."/>
            <person name="Hosoiri T."/>
            <person name="Kaku Y."/>
            <person name="Kodaira H."/>
            <person name="Kondo H."/>
            <person name="Sugawara M."/>
            <person name="Takahashi M."/>
            <person name="Kanda K."/>
            <person name="Yokoi T."/>
            <person name="Furuya T."/>
            <person name="Kikkawa E."/>
            <person name="Omura Y."/>
            <person name="Abe K."/>
            <person name="Kamihara K."/>
            <person name="Katsuta N."/>
            <person name="Sato K."/>
            <person name="Tanikawa M."/>
            <person name="Yamazaki M."/>
            <person name="Ninomiya K."/>
            <person name="Ishibashi T."/>
            <person name="Yamashita H."/>
            <person name="Murakawa K."/>
            <person name="Fujimori K."/>
            <person name="Tanai H."/>
            <person name="Kimata M."/>
            <person name="Watanabe M."/>
            <person name="Hiraoka S."/>
            <person name="Chiba Y."/>
            <person name="Ishida S."/>
            <person name="Ono Y."/>
            <person name="Takiguchi S."/>
            <person name="Watanabe S."/>
            <person name="Yosida M."/>
            <person name="Hotuta T."/>
            <person name="Kusano J."/>
            <person name="Kanehori K."/>
            <person name="Takahashi-Fujii A."/>
            <person name="Hara H."/>
            <person name="Tanase T.-O."/>
            <person name="Nomura Y."/>
            <person name="Togiya S."/>
            <person name="Komai F."/>
            <person name="Hara R."/>
            <person name="Takeuchi K."/>
            <person name="Arita M."/>
            <person name="Imose N."/>
            <person name="Musashino K."/>
            <person name="Yuuki H."/>
            <person name="Oshima A."/>
            <person name="Sasaki N."/>
            <person name="Aotsuka S."/>
            <person name="Yoshikawa Y."/>
            <person name="Matsunawa H."/>
            <person name="Ichihara T."/>
            <person name="Shiohata N."/>
            <person name="Sano S."/>
            <person name="Moriya S."/>
            <person name="Momiyama H."/>
            <person name="Satoh N."/>
            <person name="Takami S."/>
            <person name="Terashima Y."/>
            <person name="Suzuki O."/>
            <person name="Nakagawa S."/>
            <person name="Senoh A."/>
            <person name="Mizoguchi H."/>
            <person name="Goto Y."/>
            <person name="Shimizu F."/>
            <person name="Wakebe H."/>
            <person name="Hishigaki H."/>
            <person name="Watanabe T."/>
            <person name="Sugiyama A."/>
            <person name="Takemoto M."/>
            <person name="Kawakami B."/>
            <person name="Yamazaki M."/>
            <person name="Watanabe K."/>
            <person name="Kumagai A."/>
            <person name="Itakura S."/>
            <person name="Fukuzumi Y."/>
            <person name="Fujimori Y."/>
            <person name="Komiyama M."/>
            <person name="Tashiro H."/>
            <person name="Tanigami A."/>
            <person name="Fujiwara T."/>
            <person name="Ono T."/>
            <person name="Yamada K."/>
            <person name="Fujii Y."/>
            <person name="Ozaki K."/>
            <person name="Hirao M."/>
            <person name="Ohmori Y."/>
            <person name="Kawabata A."/>
            <person name="Hikiji T."/>
            <person name="Kobatake N."/>
            <person name="Inagaki H."/>
            <person name="Ikema Y."/>
            <person name="Okamoto S."/>
            <person name="Okitani R."/>
            <person name="Kawakami T."/>
            <person name="Noguchi S."/>
            <person name="Itoh T."/>
            <person name="Shigeta K."/>
            <person name="Senba T."/>
            <person name="Matsumura K."/>
            <person name="Nakajima Y."/>
            <person name="Mizuno T."/>
            <person name="Morinaga M."/>
            <person name="Sasaki M."/>
            <person name="Togashi T."/>
            <person name="Oyama M."/>
            <person name="Hata H."/>
            <person name="Watanabe M."/>
            <person name="Komatsu T."/>
            <person name="Mizushima-Sugano J."/>
            <person name="Satoh T."/>
            <person name="Shirai Y."/>
            <person name="Takahashi Y."/>
            <person name="Nakagawa K."/>
            <person name="Okumura K."/>
            <person name="Nagase T."/>
            <person name="Nomura N."/>
            <person name="Kikuchi H."/>
            <person name="Masuho Y."/>
            <person name="Yamashita R."/>
            <person name="Nakai K."/>
            <person name="Yada T."/>
            <person name="Nakamura Y."/>
            <person name="Ohara O."/>
            <person name="Isogai T."/>
            <person name="Sugano S."/>
        </authorList>
    </citation>
    <scope>NUCLEOTIDE SEQUENCE [LARGE SCALE MRNA] (ISOFORM 1)</scope>
</reference>
<reference key="5">
    <citation type="submission" date="2003-05" db="EMBL/GenBank/DDBJ databases">
        <title>Cloning of human full-length CDSs in BD Creator(TM) system donor vector.</title>
        <authorList>
            <person name="Kalnine N."/>
            <person name="Chen X."/>
            <person name="Rolfs A."/>
            <person name="Halleck A."/>
            <person name="Hines L."/>
            <person name="Eisenstein S."/>
            <person name="Koundinya M."/>
            <person name="Raphael J."/>
            <person name="Moreira D."/>
            <person name="Kelley T."/>
            <person name="LaBaer J."/>
            <person name="Lin Y."/>
            <person name="Phelan M."/>
            <person name="Farmer A."/>
        </authorList>
    </citation>
    <scope>NUCLEOTIDE SEQUENCE [LARGE SCALE MRNA] (ISOFORM 2)</scope>
</reference>
<reference key="6">
    <citation type="submission" date="2005-09" db="EMBL/GenBank/DDBJ databases">
        <authorList>
            <person name="Mural R.J."/>
            <person name="Istrail S."/>
            <person name="Sutton G.G."/>
            <person name="Florea L."/>
            <person name="Halpern A.L."/>
            <person name="Mobarry C.M."/>
            <person name="Lippert R."/>
            <person name="Walenz B."/>
            <person name="Shatkay H."/>
            <person name="Dew I."/>
            <person name="Miller J.R."/>
            <person name="Flanigan M.J."/>
            <person name="Edwards N.J."/>
            <person name="Bolanos R."/>
            <person name="Fasulo D."/>
            <person name="Halldorsson B.V."/>
            <person name="Hannenhalli S."/>
            <person name="Turner R."/>
            <person name="Yooseph S."/>
            <person name="Lu F."/>
            <person name="Nusskern D.R."/>
            <person name="Shue B.C."/>
            <person name="Zheng X.H."/>
            <person name="Zhong F."/>
            <person name="Delcher A.L."/>
            <person name="Huson D.H."/>
            <person name="Kravitz S.A."/>
            <person name="Mouchard L."/>
            <person name="Reinert K."/>
            <person name="Remington K.A."/>
            <person name="Clark A.G."/>
            <person name="Waterman M.S."/>
            <person name="Eichler E.E."/>
            <person name="Adams M.D."/>
            <person name="Hunkapiller M.W."/>
            <person name="Myers E.W."/>
            <person name="Venter J.C."/>
        </authorList>
    </citation>
    <scope>NUCLEOTIDE SEQUENCE [LARGE SCALE GENOMIC DNA]</scope>
</reference>
<reference key="7">
    <citation type="journal article" date="2004" name="Genome Res.">
        <title>The status, quality, and expansion of the NIH full-length cDNA project: the Mammalian Gene Collection (MGC).</title>
        <authorList>
            <consortium name="The MGC Project Team"/>
        </authorList>
    </citation>
    <scope>NUCLEOTIDE SEQUENCE [LARGE SCALE MRNA] (ISOFORMS 1 AND 2)</scope>
    <scope>VARIANT GLY-118</scope>
    <source>
        <tissue>Bone marrow</tissue>
        <tissue>Brain</tissue>
    </source>
</reference>
<reference key="8">
    <citation type="journal article" date="2000" name="Eur. J. Cell Biol.">
        <title>The zyxin-related protein TRIP6 interacts with PDZ motifs in the adaptor protein RIL and the protein tyrosine phosphatase PTP-BL.</title>
        <authorList>
            <person name="Cuppen E."/>
            <person name="van Ham M."/>
            <person name="Wansink D.G."/>
            <person name="de Leeuw A."/>
            <person name="Wieringa B."/>
            <person name="Hendriks W."/>
        </authorList>
    </citation>
    <scope>INTERACTION WITH TRIP6</scope>
    <scope>SUBCELLULAR LOCATION</scope>
</reference>
<reference key="9">
    <citation type="journal article" date="2003" name="J. Hum. Genet.">
        <title>Association of genetic variation of the RIL gene, encoding a PDZ-LIM domain protein and localized in 5q31.1, with low bone mineral density in adult Japanese women.</title>
        <authorList>
            <person name="Omasu F."/>
            <person name="Ezura Y."/>
            <person name="Kajita M."/>
            <person name="Ishida R."/>
            <person name="Kodaira M."/>
            <person name="Yoshida H."/>
            <person name="Suzuki T."/>
            <person name="Hosoi T."/>
            <person name="Inoue S."/>
            <person name="Shiraki M."/>
            <person name="Orimo H."/>
            <person name="Emi M."/>
        </authorList>
    </citation>
    <scope>INVOLVEMENT IN BMD</scope>
</reference>
<reference key="10">
    <citation type="journal article" date="2009" name="J. Cell Biol.">
        <title>Reversion-induced LIM interaction with Src reveals a novel Src inactivation cycle.</title>
        <authorList>
            <person name="Zhang Y."/>
            <person name="Tu Y."/>
            <person name="Zhao J."/>
            <person name="Chen K."/>
            <person name="Wu C."/>
        </authorList>
    </citation>
    <scope>FUNCTION</scope>
    <scope>INTERACTION WITH PTPN13 AND SRC</scope>
    <scope>SUBCELLULAR LOCATION</scope>
</reference>
<reference key="11">
    <citation type="journal article" date="2009" name="Mol. Cell. Proteomics">
        <title>Large-scale proteomics analysis of the human kinome.</title>
        <authorList>
            <person name="Oppermann F.S."/>
            <person name="Gnad F."/>
            <person name="Olsen J.V."/>
            <person name="Hornberger R."/>
            <person name="Greff Z."/>
            <person name="Keri G."/>
            <person name="Mann M."/>
            <person name="Daub H."/>
        </authorList>
    </citation>
    <scope>IDENTIFICATION BY MASS SPECTROMETRY [LARGE SCALE ANALYSIS]</scope>
</reference>
<reference key="12">
    <citation type="journal article" date="2011" name="BMC Syst. Biol.">
        <title>Initial characterization of the human central proteome.</title>
        <authorList>
            <person name="Burkard T.R."/>
            <person name="Planyavsky M."/>
            <person name="Kaupe I."/>
            <person name="Breitwieser F.P."/>
            <person name="Buerckstuemmer T."/>
            <person name="Bennett K.L."/>
            <person name="Superti-Furga G."/>
            <person name="Colinge J."/>
        </authorList>
    </citation>
    <scope>IDENTIFICATION BY MASS SPECTROMETRY [LARGE SCALE ANALYSIS]</scope>
</reference>
<reference key="13">
    <citation type="journal article" date="2011" name="J. Biol. Chem.">
        <title>Actin cytoskeleton remodeling by the alternatively spliced isoform of PDLIM4/RIL protein.</title>
        <authorList>
            <person name="Guryanova O.A."/>
            <person name="Drazba J.A."/>
            <person name="Frolova E.I."/>
            <person name="Chumakov P.M."/>
        </authorList>
    </citation>
    <scope>IDENTIFICATION BY MASS SPECTROMETRY (ISOFORM 2)</scope>
    <scope>FUNCTION (ISOFORMS 1 AND 2)</scope>
    <scope>INTERACTION WITH NQO1 (ISOFORMS 1 AND 2)</scope>
    <scope>SUBCELLULAR LOCATION (ISOFORMS 1 AND 2)</scope>
    <scope>INDUCTION (ISOFORM 2)</scope>
</reference>
<reference key="14">
    <citation type="journal article" date="2011" name="Sci. Signal.">
        <title>System-wide temporal characterization of the proteome and phosphoproteome of human embryonic stem cell differentiation.</title>
        <authorList>
            <person name="Rigbolt K.T."/>
            <person name="Prokhorova T.A."/>
            <person name="Akimov V."/>
            <person name="Henningsen J."/>
            <person name="Johansen P.T."/>
            <person name="Kratchmarova I."/>
            <person name="Kassem M."/>
            <person name="Mann M."/>
            <person name="Olsen J.V."/>
            <person name="Blagoev B."/>
        </authorList>
    </citation>
    <scope>PHOSPHORYLATION [LARGE SCALE ANALYSIS] AT SER-112</scope>
    <scope>IDENTIFICATION BY MASS SPECTROMETRY [LARGE SCALE ANALYSIS]</scope>
</reference>
<reference key="15">
    <citation type="journal article" date="2013" name="J. Proteome Res.">
        <title>Toward a comprehensive characterization of a human cancer cell phosphoproteome.</title>
        <authorList>
            <person name="Zhou H."/>
            <person name="Di Palma S."/>
            <person name="Preisinger C."/>
            <person name="Peng M."/>
            <person name="Polat A.N."/>
            <person name="Heck A.J."/>
            <person name="Mohammed S."/>
        </authorList>
    </citation>
    <scope>PHOSPHORYLATION [LARGE SCALE ANALYSIS] AT SER-112</scope>
    <scope>IDENTIFICATION BY MASS SPECTROMETRY [LARGE SCALE ANALYSIS]</scope>
    <source>
        <tissue>Erythroleukemia</tissue>
    </source>
</reference>
<reference key="16">
    <citation type="journal article" date="2014" name="J. Proteomics">
        <title>An enzyme assisted RP-RPLC approach for in-depth analysis of human liver phosphoproteome.</title>
        <authorList>
            <person name="Bian Y."/>
            <person name="Song C."/>
            <person name="Cheng K."/>
            <person name="Dong M."/>
            <person name="Wang F."/>
            <person name="Huang J."/>
            <person name="Sun D."/>
            <person name="Wang L."/>
            <person name="Ye M."/>
            <person name="Zou H."/>
        </authorList>
    </citation>
    <scope>PHOSPHORYLATION [LARGE SCALE ANALYSIS] AT SER-112</scope>
    <scope>IDENTIFICATION BY MASS SPECTROMETRY [LARGE SCALE ANALYSIS]</scope>
    <source>
        <tissue>Liver</tissue>
    </source>
</reference>
<reference key="17">
    <citation type="submission" date="2007-08" db="PDB data bank">
        <title>Solution structure of PDZ domain of PDZ and LIM domain protein.</title>
        <authorList>
            <consortium name="RIKEN structural genomics initiative (RSGI)"/>
        </authorList>
    </citation>
    <scope>STRUCTURE BY NMR OF 1-81</scope>
</reference>
<reference key="18">
    <citation type="journal article" date="2010" name="Protein Sci.">
        <title>Unusual binding interactions in PDZ domain crystal structures help explain binding mechanisms.</title>
        <authorList>
            <person name="Elkins J.M."/>
            <person name="Gileadi C."/>
            <person name="Shrestha L."/>
            <person name="Phillips C."/>
            <person name="Wang J."/>
            <person name="Muniz J.R."/>
            <person name="Doyle D.A."/>
        </authorList>
    </citation>
    <scope>X-RAY CRYSTALLOGRAPHY (1.90 ANGSTROMS) OF 1-85 BOUND TO C-TERMINAL PEPTIDE OF ACTN1</scope>
</reference>
<reference key="19">
    <citation type="journal article" date="2014" name="J. Mol. Biol.">
        <title>A structural portrait of the PDZ domain family.</title>
        <authorList>
            <person name="Ernst A."/>
            <person name="Appleton B.A."/>
            <person name="Ivarsson Y."/>
            <person name="Zhang Y."/>
            <person name="Gfeller D."/>
            <person name="Wiesmann C."/>
            <person name="Sidhu S.S."/>
        </authorList>
    </citation>
    <scope>X-RAY CRYSTALLOGRAPHY (2.10 ANGSTROMS) OF 1-84 BOUND TO PEPTIDE LIGAND</scope>
    <scope>SUBUNIT</scope>
    <scope>DOMAIN</scope>
</reference>
<evidence type="ECO:0000250" key="1">
    <source>
        <dbReference type="UniProtKB" id="P36202"/>
    </source>
</evidence>
<evidence type="ECO:0000250" key="2">
    <source>
        <dbReference type="UniProtKB" id="P70271"/>
    </source>
</evidence>
<evidence type="ECO:0000255" key="3">
    <source>
        <dbReference type="PROSITE-ProRule" id="PRU00125"/>
    </source>
</evidence>
<evidence type="ECO:0000255" key="4">
    <source>
        <dbReference type="PROSITE-ProRule" id="PRU00143"/>
    </source>
</evidence>
<evidence type="ECO:0000256" key="5">
    <source>
        <dbReference type="SAM" id="MobiDB-lite"/>
    </source>
</evidence>
<evidence type="ECO:0000269" key="6">
    <source>
    </source>
</evidence>
<evidence type="ECO:0000269" key="7">
    <source>
    </source>
</evidence>
<evidence type="ECO:0000269" key="8">
    <source>
    </source>
</evidence>
<evidence type="ECO:0000269" key="9">
    <source>
    </source>
</evidence>
<evidence type="ECO:0000269" key="10">
    <source>
    </source>
</evidence>
<evidence type="ECO:0000269" key="11">
    <source>
    </source>
</evidence>
<evidence type="ECO:0000269" key="12">
    <source ref="1"/>
</evidence>
<evidence type="ECO:0000303" key="13">
    <source>
    </source>
</evidence>
<evidence type="ECO:0000303" key="14">
    <source ref="5"/>
</evidence>
<evidence type="ECO:0000305" key="15"/>
<evidence type="ECO:0007744" key="16">
    <source>
        <dbReference type="PDB" id="4Q2O"/>
    </source>
</evidence>
<evidence type="ECO:0007744" key="17">
    <source>
    </source>
</evidence>
<evidence type="ECO:0007744" key="18">
    <source>
    </source>
</evidence>
<evidence type="ECO:0007744" key="19">
    <source>
    </source>
</evidence>
<evidence type="ECO:0007829" key="20">
    <source>
        <dbReference type="PDB" id="2EEG"/>
    </source>
</evidence>
<evidence type="ECO:0007829" key="21">
    <source>
        <dbReference type="PDB" id="2V1W"/>
    </source>
</evidence>
<name>PDLI4_HUMAN</name>
<dbReference type="EMBL" id="X93510">
    <property type="protein sequence ID" value="CAA63767.1"/>
    <property type="molecule type" value="mRNA"/>
</dbReference>
<dbReference type="EMBL" id="AF153882">
    <property type="protein sequence ID" value="AAD38070.1"/>
    <property type="molecule type" value="mRNA"/>
</dbReference>
<dbReference type="EMBL" id="AF154335">
    <property type="protein sequence ID" value="AAD34646.1"/>
    <property type="molecule type" value="mRNA"/>
</dbReference>
<dbReference type="EMBL" id="U82997">
    <property type="protein sequence ID" value="AAC52072.1"/>
    <property type="molecule type" value="Genomic_DNA"/>
</dbReference>
<dbReference type="EMBL" id="AK313508">
    <property type="protein sequence ID" value="BAG36288.1"/>
    <property type="molecule type" value="mRNA"/>
</dbReference>
<dbReference type="EMBL" id="BT007019">
    <property type="protein sequence ID" value="AAP35665.1"/>
    <property type="molecule type" value="mRNA"/>
</dbReference>
<dbReference type="EMBL" id="CH471062">
    <property type="protein sequence ID" value="EAW62349.1"/>
    <property type="molecule type" value="Genomic_DNA"/>
</dbReference>
<dbReference type="EMBL" id="CH471062">
    <property type="protein sequence ID" value="EAW62351.1"/>
    <property type="molecule type" value="Genomic_DNA"/>
</dbReference>
<dbReference type="EMBL" id="BC003096">
    <property type="protein sequence ID" value="AAH03096.1"/>
    <property type="molecule type" value="mRNA"/>
</dbReference>
<dbReference type="EMBL" id="BC016765">
    <property type="protein sequence ID" value="AAH16765.1"/>
    <property type="molecule type" value="mRNA"/>
</dbReference>
<dbReference type="CCDS" id="CCDS4152.1">
    <molecule id="P50479-1"/>
</dbReference>
<dbReference type="CCDS" id="CCDS47261.1">
    <molecule id="P50479-2"/>
</dbReference>
<dbReference type="RefSeq" id="NP_001124499.1">
    <molecule id="P50479-2"/>
    <property type="nucleotide sequence ID" value="NM_001131027.2"/>
</dbReference>
<dbReference type="RefSeq" id="NP_003678.2">
    <molecule id="P50479-1"/>
    <property type="nucleotide sequence ID" value="NM_003687.3"/>
</dbReference>
<dbReference type="PDB" id="2EEG">
    <property type="method" value="NMR"/>
    <property type="chains" value="A=1-81"/>
</dbReference>
<dbReference type="PDB" id="2V1W">
    <property type="method" value="X-ray"/>
    <property type="resolution" value="1.90 A"/>
    <property type="chains" value="A/B=1-85"/>
</dbReference>
<dbReference type="PDB" id="4Q2O">
    <property type="method" value="X-ray"/>
    <property type="resolution" value="2.10 A"/>
    <property type="chains" value="A/B/C/D/E/F=1-84"/>
</dbReference>
<dbReference type="PDBsum" id="2EEG"/>
<dbReference type="PDBsum" id="2V1W"/>
<dbReference type="PDBsum" id="4Q2O"/>
<dbReference type="SMR" id="P50479"/>
<dbReference type="BioGRID" id="114140">
    <property type="interactions" value="27"/>
</dbReference>
<dbReference type="CORUM" id="P50479"/>
<dbReference type="FunCoup" id="P50479">
    <property type="interactions" value="264"/>
</dbReference>
<dbReference type="IntAct" id="P50479">
    <property type="interactions" value="29"/>
</dbReference>
<dbReference type="MINT" id="P50479"/>
<dbReference type="STRING" id="9606.ENSP00000253754"/>
<dbReference type="GlyGen" id="P50479">
    <property type="glycosylation" value="1 site, 1 O-linked glycan (1 site)"/>
</dbReference>
<dbReference type="iPTMnet" id="P50479"/>
<dbReference type="PhosphoSitePlus" id="P50479"/>
<dbReference type="BioMuta" id="PDLIM4"/>
<dbReference type="DMDM" id="20141642"/>
<dbReference type="jPOST" id="P50479"/>
<dbReference type="MassIVE" id="P50479"/>
<dbReference type="PaxDb" id="9606-ENSP00000253754"/>
<dbReference type="PeptideAtlas" id="P50479"/>
<dbReference type="ProteomicsDB" id="56232">
    <molecule id="P50479-1"/>
</dbReference>
<dbReference type="ProteomicsDB" id="56233">
    <molecule id="P50479-2"/>
</dbReference>
<dbReference type="Pumba" id="P50479"/>
<dbReference type="Antibodypedia" id="2128">
    <property type="antibodies" value="198 antibodies from 27 providers"/>
</dbReference>
<dbReference type="DNASU" id="8572"/>
<dbReference type="Ensembl" id="ENST00000253754.8">
    <molecule id="P50479-1"/>
    <property type="protein sequence ID" value="ENSP00000253754.3"/>
    <property type="gene ID" value="ENSG00000131435.13"/>
</dbReference>
<dbReference type="Ensembl" id="ENST00000379018.7">
    <molecule id="P50479-2"/>
    <property type="protein sequence ID" value="ENSP00000368303.3"/>
    <property type="gene ID" value="ENSG00000131435.13"/>
</dbReference>
<dbReference type="GeneID" id="8572"/>
<dbReference type="KEGG" id="hsa:8572"/>
<dbReference type="MANE-Select" id="ENST00000253754.8">
    <property type="protein sequence ID" value="ENSP00000253754.3"/>
    <property type="RefSeq nucleotide sequence ID" value="NM_003687.4"/>
    <property type="RefSeq protein sequence ID" value="NP_003678.2"/>
</dbReference>
<dbReference type="UCSC" id="uc003kwn.4">
    <molecule id="P50479-1"/>
    <property type="organism name" value="human"/>
</dbReference>
<dbReference type="AGR" id="HGNC:16501"/>
<dbReference type="CTD" id="8572"/>
<dbReference type="DisGeNET" id="8572"/>
<dbReference type="GeneCards" id="PDLIM4"/>
<dbReference type="HGNC" id="HGNC:16501">
    <property type="gene designation" value="PDLIM4"/>
</dbReference>
<dbReference type="HPA" id="ENSG00000131435">
    <property type="expression patterns" value="Low tissue specificity"/>
</dbReference>
<dbReference type="MalaCards" id="PDLIM4"/>
<dbReference type="MIM" id="603422">
    <property type="type" value="gene"/>
</dbReference>
<dbReference type="neXtProt" id="NX_P50479"/>
<dbReference type="OpenTargets" id="ENSG00000131435"/>
<dbReference type="PharmGKB" id="PA134869796"/>
<dbReference type="VEuPathDB" id="HostDB:ENSG00000131435"/>
<dbReference type="eggNOG" id="KOG1703">
    <property type="taxonomic scope" value="Eukaryota"/>
</dbReference>
<dbReference type="GeneTree" id="ENSGT00940000159536"/>
<dbReference type="HOGENOM" id="CLU_038114_1_1_1"/>
<dbReference type="InParanoid" id="P50479"/>
<dbReference type="OMA" id="DNKQMLN"/>
<dbReference type="OrthoDB" id="1293114at2759"/>
<dbReference type="PAN-GO" id="P50479">
    <property type="GO annotations" value="9 GO annotations based on evolutionary models"/>
</dbReference>
<dbReference type="PhylomeDB" id="P50479"/>
<dbReference type="TreeFam" id="TF106408"/>
<dbReference type="PathwayCommons" id="P50479"/>
<dbReference type="SignaLink" id="P50479"/>
<dbReference type="BioGRID-ORCS" id="8572">
    <property type="hits" value="8 hits in 1153 CRISPR screens"/>
</dbReference>
<dbReference type="CD-CODE" id="DEE660B4">
    <property type="entry name" value="Stress granule"/>
</dbReference>
<dbReference type="ChiTaRS" id="PDLIM4">
    <property type="organism name" value="human"/>
</dbReference>
<dbReference type="EvolutionaryTrace" id="P50479"/>
<dbReference type="GeneWiki" id="PDLIM4"/>
<dbReference type="GenomeRNAi" id="8572"/>
<dbReference type="Pharos" id="P50479">
    <property type="development level" value="Tbio"/>
</dbReference>
<dbReference type="PRO" id="PR:P50479"/>
<dbReference type="Proteomes" id="UP000005640">
    <property type="component" value="Chromosome 5"/>
</dbReference>
<dbReference type="RNAct" id="P50479">
    <property type="molecule type" value="protein"/>
</dbReference>
<dbReference type="Bgee" id="ENSG00000131435">
    <property type="expression patterns" value="Expressed in lower esophagus muscularis layer and 170 other cell types or tissues"/>
</dbReference>
<dbReference type="ExpressionAtlas" id="P50479">
    <property type="expression patterns" value="baseline and differential"/>
</dbReference>
<dbReference type="GO" id="GO:0015629">
    <property type="term" value="C:actin cytoskeleton"/>
    <property type="evidence" value="ECO:0000314"/>
    <property type="project" value="HPA"/>
</dbReference>
<dbReference type="GO" id="GO:0005912">
    <property type="term" value="C:adherens junction"/>
    <property type="evidence" value="ECO:0000318"/>
    <property type="project" value="GO_Central"/>
</dbReference>
<dbReference type="GO" id="GO:0005737">
    <property type="term" value="C:cytoplasm"/>
    <property type="evidence" value="ECO:0000314"/>
    <property type="project" value="UniProtKB"/>
</dbReference>
<dbReference type="GO" id="GO:0005856">
    <property type="term" value="C:cytoskeleton"/>
    <property type="evidence" value="ECO:0000314"/>
    <property type="project" value="UniProtKB"/>
</dbReference>
<dbReference type="GO" id="GO:0005829">
    <property type="term" value="C:cytosol"/>
    <property type="evidence" value="ECO:0000314"/>
    <property type="project" value="HPA"/>
</dbReference>
<dbReference type="GO" id="GO:0043197">
    <property type="term" value="C:dendritic spine"/>
    <property type="evidence" value="ECO:0000250"/>
    <property type="project" value="UniProtKB"/>
</dbReference>
<dbReference type="GO" id="GO:0031905">
    <property type="term" value="C:early endosome lumen"/>
    <property type="evidence" value="ECO:0000250"/>
    <property type="project" value="UniProtKB"/>
</dbReference>
<dbReference type="GO" id="GO:0031901">
    <property type="term" value="C:early endosome membrane"/>
    <property type="evidence" value="ECO:0007669"/>
    <property type="project" value="UniProtKB-SubCell"/>
</dbReference>
<dbReference type="GO" id="GO:0031941">
    <property type="term" value="C:filamentous actin"/>
    <property type="evidence" value="ECO:0000314"/>
    <property type="project" value="UniProtKB"/>
</dbReference>
<dbReference type="GO" id="GO:0030027">
    <property type="term" value="C:lamellipodium"/>
    <property type="evidence" value="ECO:0000314"/>
    <property type="project" value="UniProtKB"/>
</dbReference>
<dbReference type="GO" id="GO:0005634">
    <property type="term" value="C:nucleus"/>
    <property type="evidence" value="ECO:0000314"/>
    <property type="project" value="UniProtKB"/>
</dbReference>
<dbReference type="GO" id="GO:0048471">
    <property type="term" value="C:perinuclear region of cytoplasm"/>
    <property type="evidence" value="ECO:0000314"/>
    <property type="project" value="UniProtKB"/>
</dbReference>
<dbReference type="GO" id="GO:0005886">
    <property type="term" value="C:plasma membrane"/>
    <property type="evidence" value="ECO:0000314"/>
    <property type="project" value="HPA"/>
</dbReference>
<dbReference type="GO" id="GO:0045211">
    <property type="term" value="C:postsynaptic membrane"/>
    <property type="evidence" value="ECO:0000250"/>
    <property type="project" value="UniProtKB"/>
</dbReference>
<dbReference type="GO" id="GO:0034777">
    <property type="term" value="C:recycling endosome lumen"/>
    <property type="evidence" value="ECO:0000250"/>
    <property type="project" value="UniProtKB"/>
</dbReference>
<dbReference type="GO" id="GO:0055038">
    <property type="term" value="C:recycling endosome membrane"/>
    <property type="evidence" value="ECO:0007669"/>
    <property type="project" value="UniProtKB-SubCell"/>
</dbReference>
<dbReference type="GO" id="GO:0001725">
    <property type="term" value="C:stress fiber"/>
    <property type="evidence" value="ECO:0000314"/>
    <property type="project" value="UniProtKB"/>
</dbReference>
<dbReference type="GO" id="GO:0030018">
    <property type="term" value="C:Z disc"/>
    <property type="evidence" value="ECO:0000318"/>
    <property type="project" value="GO_Central"/>
</dbReference>
<dbReference type="GO" id="GO:0003779">
    <property type="term" value="F:actin binding"/>
    <property type="evidence" value="ECO:0000318"/>
    <property type="project" value="GO_Central"/>
</dbReference>
<dbReference type="GO" id="GO:0051393">
    <property type="term" value="F:alpha-actinin binding"/>
    <property type="evidence" value="ECO:0000353"/>
    <property type="project" value="UniProtKB"/>
</dbReference>
<dbReference type="GO" id="GO:0046872">
    <property type="term" value="F:metal ion binding"/>
    <property type="evidence" value="ECO:0007669"/>
    <property type="project" value="UniProtKB-KW"/>
</dbReference>
<dbReference type="GO" id="GO:0051371">
    <property type="term" value="F:muscle alpha-actinin binding"/>
    <property type="evidence" value="ECO:0000318"/>
    <property type="project" value="GO_Central"/>
</dbReference>
<dbReference type="GO" id="GO:0042803">
    <property type="term" value="F:protein homodimerization activity"/>
    <property type="evidence" value="ECO:0000314"/>
    <property type="project" value="UniProtKB"/>
</dbReference>
<dbReference type="GO" id="GO:0019903">
    <property type="term" value="F:protein phosphatase binding"/>
    <property type="evidence" value="ECO:0000353"/>
    <property type="project" value="UniProtKB"/>
</dbReference>
<dbReference type="GO" id="GO:0030036">
    <property type="term" value="P:actin cytoskeleton organization"/>
    <property type="evidence" value="ECO:0000314"/>
    <property type="project" value="UniProtKB"/>
</dbReference>
<dbReference type="GO" id="GO:0098976">
    <property type="term" value="P:excitatory chemical synaptic transmission"/>
    <property type="evidence" value="ECO:0000250"/>
    <property type="project" value="UniProtKB"/>
</dbReference>
<dbReference type="GO" id="GO:0007507">
    <property type="term" value="P:heart development"/>
    <property type="evidence" value="ECO:0000318"/>
    <property type="project" value="GO_Central"/>
</dbReference>
<dbReference type="GO" id="GO:0061061">
    <property type="term" value="P:muscle structure development"/>
    <property type="evidence" value="ECO:0000318"/>
    <property type="project" value="GO_Central"/>
</dbReference>
<dbReference type="CDD" id="cd09451">
    <property type="entry name" value="LIM_RIL"/>
    <property type="match status" value="1"/>
</dbReference>
<dbReference type="CDD" id="cd06753">
    <property type="entry name" value="PDZ_PDLIM-like"/>
    <property type="match status" value="1"/>
</dbReference>
<dbReference type="FunFam" id="2.10.110.10:FF:000026">
    <property type="entry name" value="PDZ and LIM domain protein 3"/>
    <property type="match status" value="1"/>
</dbReference>
<dbReference type="FunFam" id="2.30.42.10:FF:000055">
    <property type="entry name" value="PDZ and LIM domain protein 3"/>
    <property type="match status" value="1"/>
</dbReference>
<dbReference type="Gene3D" id="2.30.42.10">
    <property type="match status" value="1"/>
</dbReference>
<dbReference type="Gene3D" id="2.10.110.10">
    <property type="entry name" value="Cysteine Rich Protein"/>
    <property type="match status" value="1"/>
</dbReference>
<dbReference type="InterPro" id="IPR031847">
    <property type="entry name" value="PDLI1-4/Zasp-like_mid"/>
</dbReference>
<dbReference type="InterPro" id="IPR001478">
    <property type="entry name" value="PDZ"/>
</dbReference>
<dbReference type="InterPro" id="IPR050604">
    <property type="entry name" value="PDZ-LIM_domain"/>
</dbReference>
<dbReference type="InterPro" id="IPR036034">
    <property type="entry name" value="PDZ_sf"/>
</dbReference>
<dbReference type="InterPro" id="IPR001781">
    <property type="entry name" value="Znf_LIM"/>
</dbReference>
<dbReference type="PANTHER" id="PTHR24214:SF6">
    <property type="entry name" value="PDZ AND LIM DOMAIN PROTEIN 4"/>
    <property type="match status" value="1"/>
</dbReference>
<dbReference type="PANTHER" id="PTHR24214">
    <property type="entry name" value="PDZ AND LIM DOMAIN PROTEIN ZASP"/>
    <property type="match status" value="1"/>
</dbReference>
<dbReference type="Pfam" id="PF15936">
    <property type="entry name" value="DUF4749"/>
    <property type="match status" value="1"/>
</dbReference>
<dbReference type="Pfam" id="PF00412">
    <property type="entry name" value="LIM"/>
    <property type="match status" value="1"/>
</dbReference>
<dbReference type="Pfam" id="PF00595">
    <property type="entry name" value="PDZ"/>
    <property type="match status" value="1"/>
</dbReference>
<dbReference type="SMART" id="SM00132">
    <property type="entry name" value="LIM"/>
    <property type="match status" value="1"/>
</dbReference>
<dbReference type="SMART" id="SM00228">
    <property type="entry name" value="PDZ"/>
    <property type="match status" value="1"/>
</dbReference>
<dbReference type="SUPFAM" id="SSF57716">
    <property type="entry name" value="Glucocorticoid receptor-like (DNA-binding domain)"/>
    <property type="match status" value="2"/>
</dbReference>
<dbReference type="SUPFAM" id="SSF50156">
    <property type="entry name" value="PDZ domain-like"/>
    <property type="match status" value="1"/>
</dbReference>
<dbReference type="PROSITE" id="PS00478">
    <property type="entry name" value="LIM_DOMAIN_1"/>
    <property type="match status" value="1"/>
</dbReference>
<dbReference type="PROSITE" id="PS50023">
    <property type="entry name" value="LIM_DOMAIN_2"/>
    <property type="match status" value="1"/>
</dbReference>
<dbReference type="PROSITE" id="PS50106">
    <property type="entry name" value="PDZ"/>
    <property type="match status" value="1"/>
</dbReference>
<protein>
    <recommendedName>
        <fullName>PDZ and LIM domain protein 4</fullName>
    </recommendedName>
    <alternativeName>
        <fullName>LIM protein RIL</fullName>
    </alternativeName>
    <alternativeName>
        <fullName>Reversion-induced LIM protein</fullName>
    </alternativeName>
</protein>
<sequence length="330" mass="35398">MPHSVTLRGPSPWGFRLVGGRDFSAPLTISRVHAGSKAALAALCPGDLIQAINGESTELMTHLEAQNRIKGCHDHLTLSVSRPEGRSWPSAPDDSKAQAHRIHIDPEIQDGSPTTSRRPSGTGTGPEDGRPSLGSPYGQPPRFPVPHNGSSEATLPAQMSTLHVSPPPSADPARGLPRSRDCRVDLGSEVYRMLREPAEPVAAEPKQSGSFRYLQGMLEAGEGGDWPGPGGPRNLKPTASKLGAPLSGLQGLPECTRCGHGIVGTIVKARDKLYHPECFMCSDCGLNLKQRGYFFLDERLYCESHAKARVKPPEGYDVVAVYPNAKVELV</sequence>
<feature type="chain" id="PRO_0000075873" description="PDZ and LIM domain protein 4">
    <location>
        <begin position="1"/>
        <end position="330"/>
    </location>
</feature>
<feature type="domain" description="PDZ" evidence="4 10 16">
    <location>
        <begin position="1"/>
        <end position="84"/>
    </location>
</feature>
<feature type="domain" description="LIM zinc-binding" evidence="3">
    <location>
        <begin position="253"/>
        <end position="312"/>
    </location>
</feature>
<feature type="region of interest" description="Disordered" evidence="5">
    <location>
        <begin position="104"/>
        <end position="180"/>
    </location>
</feature>
<feature type="compositionally biased region" description="Low complexity" evidence="5">
    <location>
        <begin position="111"/>
        <end position="121"/>
    </location>
</feature>
<feature type="compositionally biased region" description="Polar residues" evidence="5">
    <location>
        <begin position="148"/>
        <end position="163"/>
    </location>
</feature>
<feature type="modified residue" description="Phosphoserine" evidence="17 18 19">
    <location>
        <position position="112"/>
    </location>
</feature>
<feature type="modified residue" description="Phosphoserine" evidence="2">
    <location>
        <position position="116"/>
    </location>
</feature>
<feature type="modified residue" description="Phosphoserine" evidence="2">
    <location>
        <position position="120"/>
    </location>
</feature>
<feature type="modified residue" description="Phosphoserine" evidence="1">
    <location>
        <position position="135"/>
    </location>
</feature>
<feature type="splice variant" id="VSP_003124" description="In isoform 2." evidence="13 14">
    <original>DWPGPGGPRNLKPTASKLGAPLSGLQGLPECTRCGHGIVGTIVKARDKLYHPECFMCSDCGLNLKQRGYFFLDERLYCESHAKARVKPPEGYDVVAVYPNAKVELV</original>
    <variation>APSSRHGTSSTIPSASCAVTAA</variation>
    <location>
        <begin position="225"/>
        <end position="330"/>
    </location>
</feature>
<feature type="sequence variant" id="VAR_035205" description="In dbSNP:rs17851430." evidence="7">
    <original>R</original>
    <variation>G</variation>
    <location>
        <position position="118"/>
    </location>
</feature>
<feature type="sequence variant" id="VAR_050167" description="In dbSNP:rs1050805." evidence="12">
    <original>R</original>
    <variation>C</variation>
    <location>
        <position position="142"/>
    </location>
</feature>
<feature type="sequence variant" id="VAR_035206" description="In dbSNP:rs175218.">
    <original>V</original>
    <variation>I</variation>
    <location>
        <position position="184"/>
    </location>
</feature>
<feature type="sequence variant" id="VAR_035207" description="In dbSNP:rs4877." evidence="12">
    <original>G</original>
    <variation>C</variation>
    <location>
        <position position="259"/>
    </location>
</feature>
<feature type="sequence conflict" description="In Ref. 1; CAA63767." evidence="15" ref="1">
    <location>
        <position position="20"/>
    </location>
</feature>
<feature type="sequence conflict" description="In Ref. 1; CAA63767." evidence="15" ref="1">
    <original>A</original>
    <variation>S</variation>
    <location>
        <position position="39"/>
    </location>
</feature>
<feature type="sequence conflict" description="In Ref. 1; CAA63767." evidence="15" ref="1">
    <original>Q</original>
    <variation>K</variation>
    <location>
        <position position="139"/>
    </location>
</feature>
<feature type="sequence conflict" description="In Ref. 1; CAA63767." evidence="15" ref="1">
    <original>RGLPRSRDC</original>
    <variation>EASRGAGS</variation>
    <location>
        <begin position="174"/>
        <end position="182"/>
    </location>
</feature>
<feature type="sequence conflict" description="In Ref. 1; CAA63767." evidence="15" ref="1">
    <original>A</original>
    <variation>E</variation>
    <location>
        <position position="269"/>
    </location>
</feature>
<feature type="strand" evidence="21">
    <location>
        <begin position="3"/>
        <end position="11"/>
    </location>
</feature>
<feature type="strand" evidence="21">
    <location>
        <begin position="15"/>
        <end position="20"/>
    </location>
</feature>
<feature type="helix" evidence="21">
    <location>
        <begin position="21"/>
        <end position="23"/>
    </location>
</feature>
<feature type="strand" evidence="21">
    <location>
        <begin position="25"/>
        <end position="32"/>
    </location>
</feature>
<feature type="strand" evidence="20">
    <location>
        <begin position="34"/>
        <end position="36"/>
    </location>
</feature>
<feature type="helix" evidence="21">
    <location>
        <begin position="37"/>
        <end position="40"/>
    </location>
</feature>
<feature type="strand" evidence="21">
    <location>
        <begin position="48"/>
        <end position="52"/>
    </location>
</feature>
<feature type="turn" evidence="20">
    <location>
        <begin position="57"/>
        <end position="59"/>
    </location>
</feature>
<feature type="helix" evidence="21">
    <location>
        <begin position="62"/>
        <end position="70"/>
    </location>
</feature>
<feature type="strand" evidence="21">
    <location>
        <begin position="74"/>
        <end position="81"/>
    </location>
</feature>
<accession>P50479</accession>
<accession>B2R8U1</accession>
<accession>Q53Y39</accession>
<accession>Q96AT8</accession>
<accession>Q9BTW8</accession>
<accession>Q9Y292</accession>